<dbReference type="EC" id="4.1.99.22" evidence="1"/>
<dbReference type="EMBL" id="BA000040">
    <property type="protein sequence ID" value="BAC49017.1"/>
    <property type="molecule type" value="Genomic_DNA"/>
</dbReference>
<dbReference type="RefSeq" id="NP_770392.1">
    <property type="nucleotide sequence ID" value="NC_004463.1"/>
</dbReference>
<dbReference type="RefSeq" id="WP_011086533.1">
    <property type="nucleotide sequence ID" value="NC_004463.1"/>
</dbReference>
<dbReference type="SMR" id="Q89NT2"/>
<dbReference type="FunCoup" id="Q89NT2">
    <property type="interactions" value="556"/>
</dbReference>
<dbReference type="STRING" id="224911.AAV28_15725"/>
<dbReference type="EnsemblBacteria" id="BAC49017">
    <property type="protein sequence ID" value="BAC49017"/>
    <property type="gene ID" value="BAC49017"/>
</dbReference>
<dbReference type="GeneID" id="46490755"/>
<dbReference type="KEGG" id="bja:bll3752"/>
<dbReference type="PATRIC" id="fig|224911.44.peg.3415"/>
<dbReference type="eggNOG" id="COG2896">
    <property type="taxonomic scope" value="Bacteria"/>
</dbReference>
<dbReference type="HOGENOM" id="CLU_009273_0_1_5"/>
<dbReference type="InParanoid" id="Q89NT2"/>
<dbReference type="OrthoDB" id="9763993at2"/>
<dbReference type="PhylomeDB" id="Q89NT2"/>
<dbReference type="UniPathway" id="UPA00344"/>
<dbReference type="Proteomes" id="UP000002526">
    <property type="component" value="Chromosome"/>
</dbReference>
<dbReference type="GO" id="GO:0051539">
    <property type="term" value="F:4 iron, 4 sulfur cluster binding"/>
    <property type="evidence" value="ECO:0007669"/>
    <property type="project" value="UniProtKB-UniRule"/>
</dbReference>
<dbReference type="GO" id="GO:0061799">
    <property type="term" value="F:cyclic pyranopterin monophosphate synthase activity"/>
    <property type="evidence" value="ECO:0000318"/>
    <property type="project" value="GO_Central"/>
</dbReference>
<dbReference type="GO" id="GO:0061798">
    <property type="term" value="F:GTP 3',8'-cyclase activity"/>
    <property type="evidence" value="ECO:0000318"/>
    <property type="project" value="GO_Central"/>
</dbReference>
<dbReference type="GO" id="GO:0005525">
    <property type="term" value="F:GTP binding"/>
    <property type="evidence" value="ECO:0007669"/>
    <property type="project" value="UniProtKB-UniRule"/>
</dbReference>
<dbReference type="GO" id="GO:0046872">
    <property type="term" value="F:metal ion binding"/>
    <property type="evidence" value="ECO:0007669"/>
    <property type="project" value="UniProtKB-KW"/>
</dbReference>
<dbReference type="GO" id="GO:1904047">
    <property type="term" value="F:S-adenosyl-L-methionine binding"/>
    <property type="evidence" value="ECO:0007669"/>
    <property type="project" value="UniProtKB-UniRule"/>
</dbReference>
<dbReference type="GO" id="GO:0006777">
    <property type="term" value="P:Mo-molybdopterin cofactor biosynthetic process"/>
    <property type="evidence" value="ECO:0000318"/>
    <property type="project" value="GO_Central"/>
</dbReference>
<dbReference type="CDD" id="cd01335">
    <property type="entry name" value="Radical_SAM"/>
    <property type="match status" value="1"/>
</dbReference>
<dbReference type="CDD" id="cd21117">
    <property type="entry name" value="Twitch_MoaA"/>
    <property type="match status" value="1"/>
</dbReference>
<dbReference type="Gene3D" id="3.20.20.70">
    <property type="entry name" value="Aldolase class I"/>
    <property type="match status" value="1"/>
</dbReference>
<dbReference type="HAMAP" id="MF_01225_B">
    <property type="entry name" value="MoaA_B"/>
    <property type="match status" value="1"/>
</dbReference>
<dbReference type="InterPro" id="IPR013785">
    <property type="entry name" value="Aldolase_TIM"/>
</dbReference>
<dbReference type="InterPro" id="IPR006638">
    <property type="entry name" value="Elp3/MiaA/NifB-like_rSAM"/>
</dbReference>
<dbReference type="InterPro" id="IPR013483">
    <property type="entry name" value="MoaA"/>
</dbReference>
<dbReference type="InterPro" id="IPR000385">
    <property type="entry name" value="MoaA_NifB_PqqE_Fe-S-bd_CS"/>
</dbReference>
<dbReference type="InterPro" id="IPR010505">
    <property type="entry name" value="MoaA_twitch"/>
</dbReference>
<dbReference type="InterPro" id="IPR050105">
    <property type="entry name" value="MoCo_biosynth_MoaA/MoaC"/>
</dbReference>
<dbReference type="InterPro" id="IPR007197">
    <property type="entry name" value="rSAM"/>
</dbReference>
<dbReference type="NCBIfam" id="TIGR02666">
    <property type="entry name" value="moaA"/>
    <property type="match status" value="1"/>
</dbReference>
<dbReference type="PANTHER" id="PTHR22960:SF0">
    <property type="entry name" value="MOLYBDENUM COFACTOR BIOSYNTHESIS PROTEIN 1"/>
    <property type="match status" value="1"/>
</dbReference>
<dbReference type="PANTHER" id="PTHR22960">
    <property type="entry name" value="MOLYBDOPTERIN COFACTOR SYNTHESIS PROTEIN A"/>
    <property type="match status" value="1"/>
</dbReference>
<dbReference type="Pfam" id="PF13353">
    <property type="entry name" value="Fer4_12"/>
    <property type="match status" value="1"/>
</dbReference>
<dbReference type="Pfam" id="PF06463">
    <property type="entry name" value="Mob_synth_C"/>
    <property type="match status" value="1"/>
</dbReference>
<dbReference type="Pfam" id="PF04055">
    <property type="entry name" value="Radical_SAM"/>
    <property type="match status" value="1"/>
</dbReference>
<dbReference type="SFLD" id="SFLDG01383">
    <property type="entry name" value="cyclic_pyranopterin_phosphate"/>
    <property type="match status" value="1"/>
</dbReference>
<dbReference type="SFLD" id="SFLDG01067">
    <property type="entry name" value="SPASM/twitch_domain_containing"/>
    <property type="match status" value="1"/>
</dbReference>
<dbReference type="SMART" id="SM00729">
    <property type="entry name" value="Elp3"/>
    <property type="match status" value="1"/>
</dbReference>
<dbReference type="SUPFAM" id="SSF102114">
    <property type="entry name" value="Radical SAM enzymes"/>
    <property type="match status" value="1"/>
</dbReference>
<dbReference type="PROSITE" id="PS01305">
    <property type="entry name" value="MOAA_NIFB_PQQE"/>
    <property type="match status" value="1"/>
</dbReference>
<dbReference type="PROSITE" id="PS51918">
    <property type="entry name" value="RADICAL_SAM"/>
    <property type="match status" value="1"/>
</dbReference>
<organism>
    <name type="scientific">Bradyrhizobium diazoefficiens (strain JCM 10833 / BCRC 13528 / IAM 13628 / NBRC 14792 / USDA 110)</name>
    <dbReference type="NCBI Taxonomy" id="224911"/>
    <lineage>
        <taxon>Bacteria</taxon>
        <taxon>Pseudomonadati</taxon>
        <taxon>Pseudomonadota</taxon>
        <taxon>Alphaproteobacteria</taxon>
        <taxon>Hyphomicrobiales</taxon>
        <taxon>Nitrobacteraceae</taxon>
        <taxon>Bradyrhizobium</taxon>
    </lineage>
</organism>
<sequence>MNGSSANPRAALSSAMTDPFGRTISYLRVSVTDRCDLRCFYCMSEDMTFLPKADLLTLEELDRLCSAFIAKGVKKLRLTGGEPLVRRNVMTLVRSLSRHLSSGALSELTLTTNGTQLAKYARELADCGVRRINVSLDTLDPKKFREITRWGEIDKVLEGIEAARAAGLAVKINAVALKNLNEDELPSLMRWAHGKNMGLTLIEVMPMGEIGAGRIDQYLPLSLVRARLAQQFTLMDLAESTGGPARYVSVAETGGKLGFITPMTHNFCESCNRVRITCTGTLHTCLGHEDASDLRKPLRASDDDMLLADAIDRAIGLKPKGHDFIIDRRHNRPSVSRHMSVTGG</sequence>
<proteinExistence type="inferred from homology"/>
<comment type="function">
    <text evidence="1">Catalyzes the cyclization of GTP to (8S)-3',8-cyclo-7,8-dihydroguanosine 5'-triphosphate.</text>
</comment>
<comment type="catalytic activity">
    <reaction evidence="1">
        <text>GTP + AH2 + S-adenosyl-L-methionine = (8S)-3',8-cyclo-7,8-dihydroguanosine 5'-triphosphate + 5'-deoxyadenosine + L-methionine + A + H(+)</text>
        <dbReference type="Rhea" id="RHEA:49576"/>
        <dbReference type="ChEBI" id="CHEBI:13193"/>
        <dbReference type="ChEBI" id="CHEBI:15378"/>
        <dbReference type="ChEBI" id="CHEBI:17319"/>
        <dbReference type="ChEBI" id="CHEBI:17499"/>
        <dbReference type="ChEBI" id="CHEBI:37565"/>
        <dbReference type="ChEBI" id="CHEBI:57844"/>
        <dbReference type="ChEBI" id="CHEBI:59789"/>
        <dbReference type="ChEBI" id="CHEBI:131766"/>
        <dbReference type="EC" id="4.1.99.22"/>
    </reaction>
</comment>
<comment type="cofactor">
    <cofactor evidence="1">
        <name>[4Fe-4S] cluster</name>
        <dbReference type="ChEBI" id="CHEBI:49883"/>
    </cofactor>
    <text evidence="1">Binds 2 [4Fe-4S] clusters. Binds 1 [4Fe-4S] cluster coordinated with 3 cysteines and an exchangeable S-adenosyl-L-methionine and 1 [4Fe-4S] cluster coordinated with 3 cysteines and the GTP-derived substrate.</text>
</comment>
<comment type="pathway">
    <text evidence="1">Cofactor biosynthesis; molybdopterin biosynthesis.</text>
</comment>
<comment type="subunit">
    <text evidence="1">Monomer and homodimer.</text>
</comment>
<comment type="similarity">
    <text evidence="1">Belongs to the radical SAM superfamily. MoaA family.</text>
</comment>
<keyword id="KW-0004">4Fe-4S</keyword>
<keyword id="KW-0342">GTP-binding</keyword>
<keyword id="KW-0408">Iron</keyword>
<keyword id="KW-0411">Iron-sulfur</keyword>
<keyword id="KW-0456">Lyase</keyword>
<keyword id="KW-0479">Metal-binding</keyword>
<keyword id="KW-0501">Molybdenum cofactor biosynthesis</keyword>
<keyword id="KW-0547">Nucleotide-binding</keyword>
<keyword id="KW-1185">Reference proteome</keyword>
<keyword id="KW-0949">S-adenosyl-L-methionine</keyword>
<feature type="chain" id="PRO_1000054174" description="GTP 3',8-cyclase">
    <location>
        <begin position="1"/>
        <end position="344"/>
    </location>
</feature>
<feature type="domain" description="Radical SAM core" evidence="2">
    <location>
        <begin position="19"/>
        <end position="244"/>
    </location>
</feature>
<feature type="binding site" evidence="1">
    <location>
        <position position="28"/>
    </location>
    <ligand>
        <name>GTP</name>
        <dbReference type="ChEBI" id="CHEBI:37565"/>
    </ligand>
</feature>
<feature type="binding site" evidence="1">
    <location>
        <position position="35"/>
    </location>
    <ligand>
        <name>[4Fe-4S] cluster</name>
        <dbReference type="ChEBI" id="CHEBI:49883"/>
        <label>1</label>
        <note>4Fe-4S-S-AdoMet</note>
    </ligand>
</feature>
<feature type="binding site" evidence="1">
    <location>
        <position position="39"/>
    </location>
    <ligand>
        <name>[4Fe-4S] cluster</name>
        <dbReference type="ChEBI" id="CHEBI:49883"/>
        <label>1</label>
        <note>4Fe-4S-S-AdoMet</note>
    </ligand>
</feature>
<feature type="binding site" evidence="1">
    <location>
        <position position="41"/>
    </location>
    <ligand>
        <name>S-adenosyl-L-methionine</name>
        <dbReference type="ChEBI" id="CHEBI:59789"/>
    </ligand>
</feature>
<feature type="binding site" evidence="1">
    <location>
        <position position="42"/>
    </location>
    <ligand>
        <name>[4Fe-4S] cluster</name>
        <dbReference type="ChEBI" id="CHEBI:49883"/>
        <label>1</label>
        <note>4Fe-4S-S-AdoMet</note>
    </ligand>
</feature>
<feature type="binding site" evidence="1">
    <location>
        <position position="77"/>
    </location>
    <ligand>
        <name>GTP</name>
        <dbReference type="ChEBI" id="CHEBI:37565"/>
    </ligand>
</feature>
<feature type="binding site" evidence="1">
    <location>
        <position position="81"/>
    </location>
    <ligand>
        <name>S-adenosyl-L-methionine</name>
        <dbReference type="ChEBI" id="CHEBI:59789"/>
    </ligand>
</feature>
<feature type="binding site" evidence="1">
    <location>
        <position position="111"/>
    </location>
    <ligand>
        <name>GTP</name>
        <dbReference type="ChEBI" id="CHEBI:37565"/>
    </ligand>
</feature>
<feature type="binding site" evidence="1">
    <location>
        <position position="135"/>
    </location>
    <ligand>
        <name>S-adenosyl-L-methionine</name>
        <dbReference type="ChEBI" id="CHEBI:59789"/>
    </ligand>
</feature>
<feature type="binding site" evidence="1">
    <location>
        <position position="171"/>
    </location>
    <ligand>
        <name>GTP</name>
        <dbReference type="ChEBI" id="CHEBI:37565"/>
    </ligand>
</feature>
<feature type="binding site" evidence="1">
    <location>
        <position position="205"/>
    </location>
    <ligand>
        <name>S-adenosyl-L-methionine</name>
        <dbReference type="ChEBI" id="CHEBI:59789"/>
    </ligand>
</feature>
<feature type="binding site" evidence="1">
    <location>
        <position position="268"/>
    </location>
    <ligand>
        <name>[4Fe-4S] cluster</name>
        <dbReference type="ChEBI" id="CHEBI:49883"/>
        <label>2</label>
        <note>4Fe-4S-substrate</note>
    </ligand>
</feature>
<feature type="binding site" evidence="1">
    <location>
        <position position="271"/>
    </location>
    <ligand>
        <name>[4Fe-4S] cluster</name>
        <dbReference type="ChEBI" id="CHEBI:49883"/>
        <label>2</label>
        <note>4Fe-4S-substrate</note>
    </ligand>
</feature>
<feature type="binding site" evidence="1">
    <location>
        <begin position="273"/>
        <end position="275"/>
    </location>
    <ligand>
        <name>GTP</name>
        <dbReference type="ChEBI" id="CHEBI:37565"/>
    </ligand>
</feature>
<feature type="binding site" evidence="1">
    <location>
        <position position="285"/>
    </location>
    <ligand>
        <name>[4Fe-4S] cluster</name>
        <dbReference type="ChEBI" id="CHEBI:49883"/>
        <label>2</label>
        <note>4Fe-4S-substrate</note>
    </ligand>
</feature>
<reference key="1">
    <citation type="journal article" date="2002" name="DNA Res.">
        <title>Complete genomic sequence of nitrogen-fixing symbiotic bacterium Bradyrhizobium japonicum USDA110.</title>
        <authorList>
            <person name="Kaneko T."/>
            <person name="Nakamura Y."/>
            <person name="Sato S."/>
            <person name="Minamisawa K."/>
            <person name="Uchiumi T."/>
            <person name="Sasamoto S."/>
            <person name="Watanabe A."/>
            <person name="Idesawa K."/>
            <person name="Iriguchi M."/>
            <person name="Kawashima K."/>
            <person name="Kohara M."/>
            <person name="Matsumoto M."/>
            <person name="Shimpo S."/>
            <person name="Tsuruoka H."/>
            <person name="Wada T."/>
            <person name="Yamada M."/>
            <person name="Tabata S."/>
        </authorList>
    </citation>
    <scope>NUCLEOTIDE SEQUENCE [LARGE SCALE GENOMIC DNA]</scope>
    <source>
        <strain>JCM 10833 / BCRC 13528 / IAM 13628 / NBRC 14792 / USDA 110</strain>
    </source>
</reference>
<accession>Q89NT2</accession>
<protein>
    <recommendedName>
        <fullName evidence="1">GTP 3',8-cyclase</fullName>
        <ecNumber evidence="1">4.1.99.22</ecNumber>
    </recommendedName>
    <alternativeName>
        <fullName evidence="1">Molybdenum cofactor biosynthesis protein A</fullName>
    </alternativeName>
</protein>
<gene>
    <name evidence="1" type="primary">moaA</name>
    <name type="ordered locus">bll3752</name>
</gene>
<evidence type="ECO:0000255" key="1">
    <source>
        <dbReference type="HAMAP-Rule" id="MF_01225"/>
    </source>
</evidence>
<evidence type="ECO:0000255" key="2">
    <source>
        <dbReference type="PROSITE-ProRule" id="PRU01266"/>
    </source>
</evidence>
<name>MOAA_BRADU</name>